<accession>Q8U3Z6</accession>
<name>Y303_PYRFU</name>
<keyword id="KW-1185">Reference proteome</keyword>
<evidence type="ECO:0000255" key="1">
    <source>
        <dbReference type="HAMAP-Rule" id="MF_01086"/>
    </source>
</evidence>
<protein>
    <recommendedName>
        <fullName evidence="1">UPF0284 protein PF0303</fullName>
    </recommendedName>
</protein>
<comment type="similarity">
    <text evidence="1">Belongs to the UPF0284 family.</text>
</comment>
<feature type="chain" id="PRO_0000151057" description="UPF0284 protein PF0303">
    <location>
        <begin position="1"/>
        <end position="331"/>
    </location>
</feature>
<dbReference type="EMBL" id="AE009950">
    <property type="protein sequence ID" value="AAL80427.1"/>
    <property type="molecule type" value="Genomic_DNA"/>
</dbReference>
<dbReference type="SMR" id="Q8U3Z6"/>
<dbReference type="STRING" id="186497.PF0303"/>
<dbReference type="PaxDb" id="186497-PF0303"/>
<dbReference type="KEGG" id="pfu:PF0303"/>
<dbReference type="PATRIC" id="fig|186497.12.peg.318"/>
<dbReference type="eggNOG" id="arCOG04272">
    <property type="taxonomic scope" value="Archaea"/>
</dbReference>
<dbReference type="HOGENOM" id="CLU_053134_0_0_2"/>
<dbReference type="OrthoDB" id="9136at2157"/>
<dbReference type="PhylomeDB" id="Q8U3Z6"/>
<dbReference type="Proteomes" id="UP000001013">
    <property type="component" value="Chromosome"/>
</dbReference>
<dbReference type="GO" id="GO:0008939">
    <property type="term" value="F:nicotinate-nucleotide-dimethylbenzimidazole phosphoribosyltransferase activity"/>
    <property type="evidence" value="ECO:0007669"/>
    <property type="project" value="InterPro"/>
</dbReference>
<dbReference type="CDD" id="cd02439">
    <property type="entry name" value="DMB-PRT_CobT"/>
    <property type="match status" value="1"/>
</dbReference>
<dbReference type="Gene3D" id="3.40.50.10210">
    <property type="match status" value="1"/>
</dbReference>
<dbReference type="HAMAP" id="MF_01086">
    <property type="entry name" value="UPF0284"/>
    <property type="match status" value="1"/>
</dbReference>
<dbReference type="InterPro" id="IPR003200">
    <property type="entry name" value="Nict_dMeBzImd_PRibTrfase"/>
</dbReference>
<dbReference type="InterPro" id="IPR002805">
    <property type="entry name" value="Nict_dMeBzImd_PRibTrfase_arc"/>
</dbReference>
<dbReference type="InterPro" id="IPR036087">
    <property type="entry name" value="Nict_dMeBzImd_PRibTrfase_sf"/>
</dbReference>
<dbReference type="NCBIfam" id="TIGR00303">
    <property type="entry name" value="nicotinate mononucleotide-dependent phosphoribosyltransferase CobT"/>
    <property type="match status" value="1"/>
</dbReference>
<dbReference type="NCBIfam" id="NF003368">
    <property type="entry name" value="PRK04447.1-1"/>
    <property type="match status" value="1"/>
</dbReference>
<dbReference type="NCBIfam" id="NF003372">
    <property type="entry name" value="PRK04447.1-5"/>
    <property type="match status" value="1"/>
</dbReference>
<dbReference type="PANTHER" id="PTHR38811">
    <property type="match status" value="1"/>
</dbReference>
<dbReference type="PANTHER" id="PTHR38811:SF1">
    <property type="entry name" value="UPF0284 PROTEIN SLL1500"/>
    <property type="match status" value="1"/>
</dbReference>
<dbReference type="Pfam" id="PF02277">
    <property type="entry name" value="DBI_PRT"/>
    <property type="match status" value="1"/>
</dbReference>
<dbReference type="SUPFAM" id="SSF52733">
    <property type="entry name" value="Nicotinate mononucleotide:5,6-dimethylbenzimidazole phosphoribosyltransferase (CobT)"/>
    <property type="match status" value="1"/>
</dbReference>
<gene>
    <name type="ordered locus">PF0303</name>
</gene>
<organism>
    <name type="scientific">Pyrococcus furiosus (strain ATCC 43587 / DSM 3638 / JCM 8422 / Vc1)</name>
    <dbReference type="NCBI Taxonomy" id="186497"/>
    <lineage>
        <taxon>Archaea</taxon>
        <taxon>Methanobacteriati</taxon>
        <taxon>Methanobacteriota</taxon>
        <taxon>Thermococci</taxon>
        <taxon>Thermococcales</taxon>
        <taxon>Thermococcaceae</taxon>
        <taxon>Pyrococcus</taxon>
    </lineage>
</organism>
<sequence>MKSLFLLVLGNTEVSLIPGISVAGATPELTKYTPPADAEYLFYDKPKIIDAIPVTPEGHPTPAIITKAARELANFPILVVRGGTYLAPKVPHVHISSIVGRDFRREPALPEAGEIIERAKLLGQELERSGIEELVIGESTPGGTTTAQAILWALGYEGKTSSASPNNPQELKRRVIEEGFRRAGIEFGGLKGNSLEALRQFGDPMMATVVGLSLGFKGDVVLAGGTQMLAVAAILKGLGEDLSRFMIATTRWVVEDKSATFIKTAREIGIISYAADLDFSKSEFKGLRDYEKGYVKEGVGAGGATWLAVKAGFSPEDVVRKVEELYRKLIS</sequence>
<reference key="1">
    <citation type="journal article" date="1999" name="Genetics">
        <title>Divergence of the hyperthermophilic archaea Pyrococcus furiosus and P. horikoshii inferred from complete genomic sequences.</title>
        <authorList>
            <person name="Maeder D.L."/>
            <person name="Weiss R.B."/>
            <person name="Dunn D.M."/>
            <person name="Cherry J.L."/>
            <person name="Gonzalez J.M."/>
            <person name="DiRuggiero J."/>
            <person name="Robb F.T."/>
        </authorList>
    </citation>
    <scope>NUCLEOTIDE SEQUENCE [LARGE SCALE GENOMIC DNA]</scope>
    <source>
        <strain>ATCC 43587 / DSM 3638 / JCM 8422 / Vc1</strain>
    </source>
</reference>
<proteinExistence type="inferred from homology"/>